<accession>Q3ZZL8</accession>
<dbReference type="EMBL" id="AJ965256">
    <property type="protein sequence ID" value="CAI82645.1"/>
    <property type="molecule type" value="Genomic_DNA"/>
</dbReference>
<dbReference type="SMR" id="Q3ZZL8"/>
<dbReference type="KEGG" id="deh:cbdbA445"/>
<dbReference type="HOGENOM" id="CLU_058591_0_2_0"/>
<dbReference type="Proteomes" id="UP000000433">
    <property type="component" value="Chromosome"/>
</dbReference>
<dbReference type="GO" id="GO:0022627">
    <property type="term" value="C:cytosolic small ribosomal subunit"/>
    <property type="evidence" value="ECO:0007669"/>
    <property type="project" value="TreeGrafter"/>
</dbReference>
<dbReference type="GO" id="GO:0003729">
    <property type="term" value="F:mRNA binding"/>
    <property type="evidence" value="ECO:0007669"/>
    <property type="project" value="UniProtKB-UniRule"/>
</dbReference>
<dbReference type="GO" id="GO:0019843">
    <property type="term" value="F:rRNA binding"/>
    <property type="evidence" value="ECO:0007669"/>
    <property type="project" value="UniProtKB-UniRule"/>
</dbReference>
<dbReference type="GO" id="GO:0003735">
    <property type="term" value="F:structural constituent of ribosome"/>
    <property type="evidence" value="ECO:0007669"/>
    <property type="project" value="InterPro"/>
</dbReference>
<dbReference type="GO" id="GO:0006412">
    <property type="term" value="P:translation"/>
    <property type="evidence" value="ECO:0007669"/>
    <property type="project" value="UniProtKB-UniRule"/>
</dbReference>
<dbReference type="CDD" id="cd02412">
    <property type="entry name" value="KH-II_30S_S3"/>
    <property type="match status" value="1"/>
</dbReference>
<dbReference type="FunFam" id="3.30.300.20:FF:000001">
    <property type="entry name" value="30S ribosomal protein S3"/>
    <property type="match status" value="1"/>
</dbReference>
<dbReference type="Gene3D" id="3.30.300.20">
    <property type="match status" value="1"/>
</dbReference>
<dbReference type="Gene3D" id="3.30.1140.32">
    <property type="entry name" value="Ribosomal protein S3, C-terminal domain"/>
    <property type="match status" value="1"/>
</dbReference>
<dbReference type="HAMAP" id="MF_01309_B">
    <property type="entry name" value="Ribosomal_uS3_B"/>
    <property type="match status" value="1"/>
</dbReference>
<dbReference type="InterPro" id="IPR004087">
    <property type="entry name" value="KH_dom"/>
</dbReference>
<dbReference type="InterPro" id="IPR015946">
    <property type="entry name" value="KH_dom-like_a/b"/>
</dbReference>
<dbReference type="InterPro" id="IPR004044">
    <property type="entry name" value="KH_dom_type_2"/>
</dbReference>
<dbReference type="InterPro" id="IPR009019">
    <property type="entry name" value="KH_sf_prok-type"/>
</dbReference>
<dbReference type="InterPro" id="IPR036419">
    <property type="entry name" value="Ribosomal_S3_C_sf"/>
</dbReference>
<dbReference type="InterPro" id="IPR005704">
    <property type="entry name" value="Ribosomal_uS3_bac-typ"/>
</dbReference>
<dbReference type="InterPro" id="IPR001351">
    <property type="entry name" value="Ribosomal_uS3_C"/>
</dbReference>
<dbReference type="InterPro" id="IPR018280">
    <property type="entry name" value="Ribosomal_uS3_CS"/>
</dbReference>
<dbReference type="NCBIfam" id="TIGR01009">
    <property type="entry name" value="rpsC_bact"/>
    <property type="match status" value="1"/>
</dbReference>
<dbReference type="PANTHER" id="PTHR11760">
    <property type="entry name" value="30S/40S RIBOSOMAL PROTEIN S3"/>
    <property type="match status" value="1"/>
</dbReference>
<dbReference type="PANTHER" id="PTHR11760:SF19">
    <property type="entry name" value="SMALL RIBOSOMAL SUBUNIT PROTEIN US3C"/>
    <property type="match status" value="1"/>
</dbReference>
<dbReference type="Pfam" id="PF07650">
    <property type="entry name" value="KH_2"/>
    <property type="match status" value="1"/>
</dbReference>
<dbReference type="Pfam" id="PF00189">
    <property type="entry name" value="Ribosomal_S3_C"/>
    <property type="match status" value="1"/>
</dbReference>
<dbReference type="SMART" id="SM00322">
    <property type="entry name" value="KH"/>
    <property type="match status" value="1"/>
</dbReference>
<dbReference type="SUPFAM" id="SSF54814">
    <property type="entry name" value="Prokaryotic type KH domain (KH-domain type II)"/>
    <property type="match status" value="1"/>
</dbReference>
<dbReference type="SUPFAM" id="SSF54821">
    <property type="entry name" value="Ribosomal protein S3 C-terminal domain"/>
    <property type="match status" value="1"/>
</dbReference>
<dbReference type="PROSITE" id="PS50823">
    <property type="entry name" value="KH_TYPE_2"/>
    <property type="match status" value="1"/>
</dbReference>
<dbReference type="PROSITE" id="PS00548">
    <property type="entry name" value="RIBOSOMAL_S3"/>
    <property type="match status" value="1"/>
</dbReference>
<proteinExistence type="inferred from homology"/>
<protein>
    <recommendedName>
        <fullName evidence="1">Small ribosomal subunit protein uS3</fullName>
    </recommendedName>
    <alternativeName>
        <fullName evidence="3">30S ribosomal protein S3</fullName>
    </alternativeName>
</protein>
<reference key="1">
    <citation type="journal article" date="2005" name="Nat. Biotechnol.">
        <title>Genome sequence of the chlorinated compound-respiring bacterium Dehalococcoides species strain CBDB1.</title>
        <authorList>
            <person name="Kube M."/>
            <person name="Beck A."/>
            <person name="Zinder S.H."/>
            <person name="Kuhl H."/>
            <person name="Reinhardt R."/>
            <person name="Adrian L."/>
        </authorList>
    </citation>
    <scope>NUCLEOTIDE SEQUENCE [LARGE SCALE GENOMIC DNA]</scope>
    <source>
        <strain>CBDB1</strain>
    </source>
</reference>
<comment type="function">
    <text evidence="1">Binds the lower part of the 30S subunit head. Binds mRNA in the 70S ribosome, positioning it for translation.</text>
</comment>
<comment type="subunit">
    <text evidence="1">Part of the 30S ribosomal subunit. Forms a tight complex with proteins S10 and S14.</text>
</comment>
<comment type="similarity">
    <text evidence="1">Belongs to the universal ribosomal protein uS3 family.</text>
</comment>
<feature type="chain" id="PRO_0000230695" description="Small ribosomal subunit protein uS3">
    <location>
        <begin position="1"/>
        <end position="278"/>
    </location>
</feature>
<feature type="domain" description="KH type-2" evidence="1">
    <location>
        <begin position="39"/>
        <end position="107"/>
    </location>
</feature>
<feature type="region of interest" description="Disordered" evidence="2">
    <location>
        <begin position="255"/>
        <end position="278"/>
    </location>
</feature>
<evidence type="ECO:0000255" key="1">
    <source>
        <dbReference type="HAMAP-Rule" id="MF_01309"/>
    </source>
</evidence>
<evidence type="ECO:0000256" key="2">
    <source>
        <dbReference type="SAM" id="MobiDB-lite"/>
    </source>
</evidence>
<evidence type="ECO:0000305" key="3"/>
<name>RS3_DEHMC</name>
<organism>
    <name type="scientific">Dehalococcoides mccartyi (strain CBDB1)</name>
    <dbReference type="NCBI Taxonomy" id="255470"/>
    <lineage>
        <taxon>Bacteria</taxon>
        <taxon>Bacillati</taxon>
        <taxon>Chloroflexota</taxon>
        <taxon>Dehalococcoidia</taxon>
        <taxon>Dehalococcoidales</taxon>
        <taxon>Dehalococcoidaceae</taxon>
        <taxon>Dehalococcoides</taxon>
    </lineage>
</organism>
<keyword id="KW-0687">Ribonucleoprotein</keyword>
<keyword id="KW-0689">Ribosomal protein</keyword>
<keyword id="KW-0694">RNA-binding</keyword>
<keyword id="KW-0699">rRNA-binding</keyword>
<gene>
    <name evidence="1" type="primary">rpsC</name>
    <name type="ordered locus">cbdbA445</name>
</gene>
<sequence length="278" mass="30872">MGRKVHPIGFRLGIIKDWSAKWHASDKNFAECLTEDLKLRKAISKKYVDAAISQVDIERQSNKVTVSVRTARPGIVIGRGGQRVDEMRHFLEDLIGKKVQLNIVEISQAELDAFLVARSVAEQIERRVAYRRAMKQAIFRSMQAGAKGIKICASGRLGGVEIARREVMHEGRVPLHTLRADIDYGCTRAHTALGDVGIKVWVYRGDILPEAKEKSESEVTEMAAVMADAPAAVVTETKVADIAAKPKRVVKKAEAEIPAEEKPKRVVKKAENITKEEE</sequence>